<accession>A1TT56</accession>
<organism>
    <name type="scientific">Paracidovorax citrulli (strain AAC00-1)</name>
    <name type="common">Acidovorax citrulli</name>
    <dbReference type="NCBI Taxonomy" id="397945"/>
    <lineage>
        <taxon>Bacteria</taxon>
        <taxon>Pseudomonadati</taxon>
        <taxon>Pseudomonadota</taxon>
        <taxon>Betaproteobacteria</taxon>
        <taxon>Burkholderiales</taxon>
        <taxon>Comamonadaceae</taxon>
        <taxon>Paracidovorax</taxon>
    </lineage>
</organism>
<keyword id="KW-0678">Repressor</keyword>
<keyword id="KW-0346">Stress response</keyword>
<keyword id="KW-0804">Transcription</keyword>
<keyword id="KW-0805">Transcription regulation</keyword>
<sequence length="334" mass="36695">MLDDRAKLLLKALIERYIADGQPVGSRTLSRSSGLDLSPATIRNVMADLEDIGLIASPHTSAGRIPTAKGYRLFVDTMLTVQRGELCSPELAPDQPQKVIANAAQLLSSLSQFVGVVMAPRRPSVFRHIEFLRLSERRLLVIIVSPDGDVQNRVIFTEVDHSQSQLAEAANFLNSHYSGLGMEEVRERLKTEVDQLRGEIASLMQAAVNVGSEAMAASQEEVVISGERNLLALSDFSNDMGNLRKAFDLFEQKTQILRLLDVSNRAEGVRIFIGGESQVVPFEELSVVSAPYEVDGQVVGTLGVIGPTRMPYDRMIQIVDITSKLVTNALSHRR</sequence>
<gene>
    <name evidence="1" type="primary">hrcA</name>
    <name type="ordered locus">Aave_3593</name>
</gene>
<protein>
    <recommendedName>
        <fullName evidence="1">Heat-inducible transcription repressor HrcA</fullName>
    </recommendedName>
</protein>
<evidence type="ECO:0000255" key="1">
    <source>
        <dbReference type="HAMAP-Rule" id="MF_00081"/>
    </source>
</evidence>
<proteinExistence type="inferred from homology"/>
<feature type="chain" id="PRO_1000118281" description="Heat-inducible transcription repressor HrcA">
    <location>
        <begin position="1"/>
        <end position="334"/>
    </location>
</feature>
<dbReference type="EMBL" id="CP000512">
    <property type="protein sequence ID" value="ABM34144.1"/>
    <property type="molecule type" value="Genomic_DNA"/>
</dbReference>
<dbReference type="RefSeq" id="WP_011796641.1">
    <property type="nucleotide sequence ID" value="NC_008752.1"/>
</dbReference>
<dbReference type="SMR" id="A1TT56"/>
<dbReference type="STRING" id="397945.Aave_3593"/>
<dbReference type="GeneID" id="79791524"/>
<dbReference type="KEGG" id="aav:Aave_3593"/>
<dbReference type="eggNOG" id="COG1420">
    <property type="taxonomic scope" value="Bacteria"/>
</dbReference>
<dbReference type="HOGENOM" id="CLU_050019_0_0_4"/>
<dbReference type="OrthoDB" id="9783139at2"/>
<dbReference type="Proteomes" id="UP000002596">
    <property type="component" value="Chromosome"/>
</dbReference>
<dbReference type="GO" id="GO:0003677">
    <property type="term" value="F:DNA binding"/>
    <property type="evidence" value="ECO:0007669"/>
    <property type="project" value="InterPro"/>
</dbReference>
<dbReference type="GO" id="GO:0045892">
    <property type="term" value="P:negative regulation of DNA-templated transcription"/>
    <property type="evidence" value="ECO:0007669"/>
    <property type="project" value="UniProtKB-UniRule"/>
</dbReference>
<dbReference type="Gene3D" id="3.30.450.40">
    <property type="match status" value="1"/>
</dbReference>
<dbReference type="Gene3D" id="3.30.390.60">
    <property type="entry name" value="Heat-inducible transcription repressor hrca homolog, domain 3"/>
    <property type="match status" value="1"/>
</dbReference>
<dbReference type="Gene3D" id="1.10.10.10">
    <property type="entry name" value="Winged helix-like DNA-binding domain superfamily/Winged helix DNA-binding domain"/>
    <property type="match status" value="1"/>
</dbReference>
<dbReference type="HAMAP" id="MF_00081">
    <property type="entry name" value="HrcA"/>
    <property type="match status" value="1"/>
</dbReference>
<dbReference type="InterPro" id="IPR029016">
    <property type="entry name" value="GAF-like_dom_sf"/>
</dbReference>
<dbReference type="InterPro" id="IPR002571">
    <property type="entry name" value="HrcA"/>
</dbReference>
<dbReference type="InterPro" id="IPR021153">
    <property type="entry name" value="HrcA_C"/>
</dbReference>
<dbReference type="InterPro" id="IPR036388">
    <property type="entry name" value="WH-like_DNA-bd_sf"/>
</dbReference>
<dbReference type="InterPro" id="IPR036390">
    <property type="entry name" value="WH_DNA-bd_sf"/>
</dbReference>
<dbReference type="InterPro" id="IPR005104">
    <property type="entry name" value="WHTH_HrcA_DNA-bd"/>
</dbReference>
<dbReference type="InterPro" id="IPR023120">
    <property type="entry name" value="WHTH_transcript_rep_HrcA_IDD"/>
</dbReference>
<dbReference type="NCBIfam" id="TIGR00331">
    <property type="entry name" value="hrcA"/>
    <property type="match status" value="1"/>
</dbReference>
<dbReference type="PANTHER" id="PTHR34824">
    <property type="entry name" value="HEAT-INDUCIBLE TRANSCRIPTION REPRESSOR HRCA"/>
    <property type="match status" value="1"/>
</dbReference>
<dbReference type="PANTHER" id="PTHR34824:SF1">
    <property type="entry name" value="HEAT-INDUCIBLE TRANSCRIPTION REPRESSOR HRCA"/>
    <property type="match status" value="1"/>
</dbReference>
<dbReference type="Pfam" id="PF01628">
    <property type="entry name" value="HrcA"/>
    <property type="match status" value="1"/>
</dbReference>
<dbReference type="Pfam" id="PF03444">
    <property type="entry name" value="HrcA_DNA-bdg"/>
    <property type="match status" value="1"/>
</dbReference>
<dbReference type="PIRSF" id="PIRSF005485">
    <property type="entry name" value="HrcA"/>
    <property type="match status" value="1"/>
</dbReference>
<dbReference type="SUPFAM" id="SSF55781">
    <property type="entry name" value="GAF domain-like"/>
    <property type="match status" value="1"/>
</dbReference>
<dbReference type="SUPFAM" id="SSF46785">
    <property type="entry name" value="Winged helix' DNA-binding domain"/>
    <property type="match status" value="1"/>
</dbReference>
<comment type="function">
    <text evidence="1">Negative regulator of class I heat shock genes (grpE-dnaK-dnaJ and groELS operons). Prevents heat-shock induction of these operons.</text>
</comment>
<comment type="similarity">
    <text evidence="1">Belongs to the HrcA family.</text>
</comment>
<reference key="1">
    <citation type="submission" date="2006-12" db="EMBL/GenBank/DDBJ databases">
        <title>Complete sequence of Acidovorax avenae subsp. citrulli AAC00-1.</title>
        <authorList>
            <person name="Copeland A."/>
            <person name="Lucas S."/>
            <person name="Lapidus A."/>
            <person name="Barry K."/>
            <person name="Detter J.C."/>
            <person name="Glavina del Rio T."/>
            <person name="Dalin E."/>
            <person name="Tice H."/>
            <person name="Pitluck S."/>
            <person name="Kiss H."/>
            <person name="Brettin T."/>
            <person name="Bruce D."/>
            <person name="Han C."/>
            <person name="Tapia R."/>
            <person name="Gilna P."/>
            <person name="Schmutz J."/>
            <person name="Larimer F."/>
            <person name="Land M."/>
            <person name="Hauser L."/>
            <person name="Kyrpides N."/>
            <person name="Kim E."/>
            <person name="Stahl D."/>
            <person name="Richardson P."/>
        </authorList>
    </citation>
    <scope>NUCLEOTIDE SEQUENCE [LARGE SCALE GENOMIC DNA]</scope>
    <source>
        <strain>AAC00-1</strain>
    </source>
</reference>
<name>HRCA_PARC0</name>